<dbReference type="EC" id="2.3.2.29" evidence="1"/>
<dbReference type="EMBL" id="CP000570">
    <property type="protein sequence ID" value="ABN83830.1"/>
    <property type="molecule type" value="Genomic_DNA"/>
</dbReference>
<dbReference type="RefSeq" id="WP_004192823.1">
    <property type="nucleotide sequence ID" value="NC_009074.1"/>
</dbReference>
<dbReference type="SMR" id="A3N926"/>
<dbReference type="KEGG" id="bpd:BURPS668_1810"/>
<dbReference type="HOGENOM" id="CLU_077607_0_0_4"/>
<dbReference type="GO" id="GO:0005737">
    <property type="term" value="C:cytoplasm"/>
    <property type="evidence" value="ECO:0007669"/>
    <property type="project" value="UniProtKB-SubCell"/>
</dbReference>
<dbReference type="GO" id="GO:0004057">
    <property type="term" value="F:arginyl-tRNA--protein transferase activity"/>
    <property type="evidence" value="ECO:0007669"/>
    <property type="project" value="InterPro"/>
</dbReference>
<dbReference type="GO" id="GO:0008914">
    <property type="term" value="F:leucyl-tRNA--protein transferase activity"/>
    <property type="evidence" value="ECO:0007669"/>
    <property type="project" value="UniProtKB-UniRule"/>
</dbReference>
<dbReference type="GO" id="GO:0071596">
    <property type="term" value="P:ubiquitin-dependent protein catabolic process via the N-end rule pathway"/>
    <property type="evidence" value="ECO:0007669"/>
    <property type="project" value="InterPro"/>
</dbReference>
<dbReference type="HAMAP" id="MF_00689">
    <property type="entry name" value="Bpt"/>
    <property type="match status" value="1"/>
</dbReference>
<dbReference type="InterPro" id="IPR016181">
    <property type="entry name" value="Acyl_CoA_acyltransferase"/>
</dbReference>
<dbReference type="InterPro" id="IPR017138">
    <property type="entry name" value="Asp_Glu_LeuTrfase"/>
</dbReference>
<dbReference type="InterPro" id="IPR030700">
    <property type="entry name" value="N-end_Aminoacyl_Trfase"/>
</dbReference>
<dbReference type="InterPro" id="IPR007472">
    <property type="entry name" value="N-end_Aminoacyl_Trfase_C"/>
</dbReference>
<dbReference type="InterPro" id="IPR007471">
    <property type="entry name" value="N-end_Aminoacyl_Trfase_N"/>
</dbReference>
<dbReference type="NCBIfam" id="NF002341">
    <property type="entry name" value="PRK01305.1-1"/>
    <property type="match status" value="1"/>
</dbReference>
<dbReference type="NCBIfam" id="NF002342">
    <property type="entry name" value="PRK01305.1-3"/>
    <property type="match status" value="1"/>
</dbReference>
<dbReference type="NCBIfam" id="NF002346">
    <property type="entry name" value="PRK01305.2-3"/>
    <property type="match status" value="1"/>
</dbReference>
<dbReference type="PANTHER" id="PTHR21367">
    <property type="entry name" value="ARGININE-TRNA-PROTEIN TRANSFERASE 1"/>
    <property type="match status" value="1"/>
</dbReference>
<dbReference type="PANTHER" id="PTHR21367:SF1">
    <property type="entry name" value="ARGINYL-TRNA--PROTEIN TRANSFERASE 1"/>
    <property type="match status" value="1"/>
</dbReference>
<dbReference type="Pfam" id="PF04377">
    <property type="entry name" value="ATE_C"/>
    <property type="match status" value="1"/>
</dbReference>
<dbReference type="Pfam" id="PF04376">
    <property type="entry name" value="ATE_N"/>
    <property type="match status" value="1"/>
</dbReference>
<dbReference type="PIRSF" id="PIRSF037208">
    <property type="entry name" value="ATE_pro_prd"/>
    <property type="match status" value="1"/>
</dbReference>
<dbReference type="SUPFAM" id="SSF55729">
    <property type="entry name" value="Acyl-CoA N-acyltransferases (Nat)"/>
    <property type="match status" value="1"/>
</dbReference>
<name>BPT_BURP6</name>
<evidence type="ECO:0000255" key="1">
    <source>
        <dbReference type="HAMAP-Rule" id="MF_00689"/>
    </source>
</evidence>
<keyword id="KW-0012">Acyltransferase</keyword>
<keyword id="KW-0963">Cytoplasm</keyword>
<keyword id="KW-0808">Transferase</keyword>
<sequence length="276" mass="31209">MTHPTELPLSPLSALQFYATAPYPCSYLDGRVARSQVATPSHLINSDIYTELVKAGFRRSGVFTYRPYCDGCRACVPVRVPVDAFAPNRTQRRTWKRHRALVATVAALHYDEEHYALYMRYQSARHAGGGMDRDSRDQYEQFLLQSRINSRLVEFRDLDPAENGASTLRMVSMIDILGDGLSSVYTFFDPDESHASYGTYNILWQIEQAKSLRLPYVYLGYWIRESPKMAYKANFHPLEGLVDGRWKVLDPTLADLPPVDAALARAPLPGGHSGTR</sequence>
<proteinExistence type="inferred from homology"/>
<accession>A3N926</accession>
<feature type="chain" id="PRO_1000045130" description="Aspartate/glutamate leucyltransferase">
    <location>
        <begin position="1"/>
        <end position="276"/>
    </location>
</feature>
<organism>
    <name type="scientific">Burkholderia pseudomallei (strain 668)</name>
    <dbReference type="NCBI Taxonomy" id="320373"/>
    <lineage>
        <taxon>Bacteria</taxon>
        <taxon>Pseudomonadati</taxon>
        <taxon>Pseudomonadota</taxon>
        <taxon>Betaproteobacteria</taxon>
        <taxon>Burkholderiales</taxon>
        <taxon>Burkholderiaceae</taxon>
        <taxon>Burkholderia</taxon>
        <taxon>pseudomallei group</taxon>
    </lineage>
</organism>
<gene>
    <name evidence="1" type="primary">bpt</name>
    <name type="ordered locus">BURPS668_1810</name>
</gene>
<comment type="function">
    <text evidence="1">Functions in the N-end rule pathway of protein degradation where it conjugates Leu from its aminoacyl-tRNA to the N-termini of proteins containing an N-terminal aspartate or glutamate.</text>
</comment>
<comment type="catalytic activity">
    <reaction evidence="1">
        <text>N-terminal L-glutamyl-[protein] + L-leucyl-tRNA(Leu) = N-terminal L-leucyl-L-glutamyl-[protein] + tRNA(Leu) + H(+)</text>
        <dbReference type="Rhea" id="RHEA:50412"/>
        <dbReference type="Rhea" id="RHEA-COMP:9613"/>
        <dbReference type="Rhea" id="RHEA-COMP:9622"/>
        <dbReference type="Rhea" id="RHEA-COMP:12664"/>
        <dbReference type="Rhea" id="RHEA-COMP:12668"/>
        <dbReference type="ChEBI" id="CHEBI:15378"/>
        <dbReference type="ChEBI" id="CHEBI:64721"/>
        <dbReference type="ChEBI" id="CHEBI:78442"/>
        <dbReference type="ChEBI" id="CHEBI:78494"/>
        <dbReference type="ChEBI" id="CHEBI:133041"/>
        <dbReference type="EC" id="2.3.2.29"/>
    </reaction>
</comment>
<comment type="catalytic activity">
    <reaction evidence="1">
        <text>N-terminal L-aspartyl-[protein] + L-leucyl-tRNA(Leu) = N-terminal L-leucyl-L-aspartyl-[protein] + tRNA(Leu) + H(+)</text>
        <dbReference type="Rhea" id="RHEA:50420"/>
        <dbReference type="Rhea" id="RHEA-COMP:9613"/>
        <dbReference type="Rhea" id="RHEA-COMP:9622"/>
        <dbReference type="Rhea" id="RHEA-COMP:12669"/>
        <dbReference type="Rhea" id="RHEA-COMP:12674"/>
        <dbReference type="ChEBI" id="CHEBI:15378"/>
        <dbReference type="ChEBI" id="CHEBI:64720"/>
        <dbReference type="ChEBI" id="CHEBI:78442"/>
        <dbReference type="ChEBI" id="CHEBI:78494"/>
        <dbReference type="ChEBI" id="CHEBI:133042"/>
        <dbReference type="EC" id="2.3.2.29"/>
    </reaction>
</comment>
<comment type="subcellular location">
    <subcellularLocation>
        <location evidence="1">Cytoplasm</location>
    </subcellularLocation>
</comment>
<comment type="similarity">
    <text evidence="1">Belongs to the R-transferase family. Bpt subfamily.</text>
</comment>
<reference key="1">
    <citation type="journal article" date="2010" name="Genome Biol. Evol.">
        <title>Continuing evolution of Burkholderia mallei through genome reduction and large-scale rearrangements.</title>
        <authorList>
            <person name="Losada L."/>
            <person name="Ronning C.M."/>
            <person name="DeShazer D."/>
            <person name="Woods D."/>
            <person name="Fedorova N."/>
            <person name="Kim H.S."/>
            <person name="Shabalina S.A."/>
            <person name="Pearson T.R."/>
            <person name="Brinkac L."/>
            <person name="Tan P."/>
            <person name="Nandi T."/>
            <person name="Crabtree J."/>
            <person name="Badger J."/>
            <person name="Beckstrom-Sternberg S."/>
            <person name="Saqib M."/>
            <person name="Schutzer S.E."/>
            <person name="Keim P."/>
            <person name="Nierman W.C."/>
        </authorList>
    </citation>
    <scope>NUCLEOTIDE SEQUENCE [LARGE SCALE GENOMIC DNA]</scope>
    <source>
        <strain>668</strain>
    </source>
</reference>
<protein>
    <recommendedName>
        <fullName evidence="1">Aspartate/glutamate leucyltransferase</fullName>
        <ecNumber evidence="1">2.3.2.29</ecNumber>
    </recommendedName>
</protein>